<protein>
    <recommendedName>
        <fullName evidence="1">Putative N-acetylmannosamine-6-phosphate 2-epimerase</fullName>
        <ecNumber evidence="1">5.1.3.9</ecNumber>
    </recommendedName>
    <alternativeName>
        <fullName evidence="1">ManNAc-6-P epimerase</fullName>
    </alternativeName>
</protein>
<reference key="1">
    <citation type="journal article" date="2002" name="Nature">
        <title>Modulation of virulence within a pathogenicity island in vancomycin-resistant Enterococcus faecalis.</title>
        <authorList>
            <person name="Shankar N."/>
            <person name="Baghdayan A.S."/>
            <person name="Gilmore M.S."/>
        </authorList>
    </citation>
    <scope>NUCLEOTIDE SEQUENCE [GENOMIC DNA]</scope>
</reference>
<reference key="2">
    <citation type="journal article" date="2003" name="Science">
        <title>Role of mobile DNA in the evolution of vancomycin-resistant Enterococcus faecalis.</title>
        <authorList>
            <person name="Paulsen I.T."/>
            <person name="Banerjei L."/>
            <person name="Myers G.S.A."/>
            <person name="Nelson K.E."/>
            <person name="Seshadri R."/>
            <person name="Read T.D."/>
            <person name="Fouts D.E."/>
            <person name="Eisen J.A."/>
            <person name="Gill S.R."/>
            <person name="Heidelberg J.F."/>
            <person name="Tettelin H."/>
            <person name="Dodson R.J."/>
            <person name="Umayam L.A."/>
            <person name="Brinkac L.M."/>
            <person name="Beanan M.J."/>
            <person name="Daugherty S.C."/>
            <person name="DeBoy R.T."/>
            <person name="Durkin S.A."/>
            <person name="Kolonay J.F."/>
            <person name="Madupu R."/>
            <person name="Nelson W.C."/>
            <person name="Vamathevan J.J."/>
            <person name="Tran B."/>
            <person name="Upton J."/>
            <person name="Hansen T."/>
            <person name="Shetty J."/>
            <person name="Khouri H.M."/>
            <person name="Utterback T.R."/>
            <person name="Radune D."/>
            <person name="Ketchum K.A."/>
            <person name="Dougherty B.A."/>
            <person name="Fraser C.M."/>
        </authorList>
    </citation>
    <scope>NUCLEOTIDE SEQUENCE [LARGE SCALE GENOMIC DNA]</scope>
    <source>
        <strain>ATCC 700802 / V583</strain>
    </source>
</reference>
<organism>
    <name type="scientific">Enterococcus faecalis (strain ATCC 700802 / V583)</name>
    <dbReference type="NCBI Taxonomy" id="226185"/>
    <lineage>
        <taxon>Bacteria</taxon>
        <taxon>Bacillati</taxon>
        <taxon>Bacillota</taxon>
        <taxon>Bacilli</taxon>
        <taxon>Lactobacillales</taxon>
        <taxon>Enterococcaceae</taxon>
        <taxon>Enterococcus</taxon>
    </lineage>
</organism>
<sequence length="235" mass="25802">MNKAKFLEVISGGLIVSCQALPGEPFYTEEGGLMPYFALAAKNAGAVGIRANSVRDIKEIKEKVSLPIIGIIKRDYPPEEPFITATMREVDELVAIGVEVIALDCTLRKRHDGLSINTFIEKVKKKYPQQLLMADISTFEEGKNAYQAGVDFVGTTLSGYTKESKKQNGPDMKLIKQLVQENICVIAEGKIHTPEQARQIKKLGVAGIVVGGAITRPQEIAKRFVDALNKEEKDV</sequence>
<evidence type="ECO:0000255" key="1">
    <source>
        <dbReference type="HAMAP-Rule" id="MF_01235"/>
    </source>
</evidence>
<evidence type="ECO:0000305" key="2"/>
<proteinExistence type="inferred from homology"/>
<accession>Q8KU93</accession>
<comment type="function">
    <text evidence="1">Converts N-acetylmannosamine-6-phosphate (ManNAc-6-P) to N-acetylglucosamine-6-phosphate (GlcNAc-6-P).</text>
</comment>
<comment type="catalytic activity">
    <reaction evidence="1">
        <text>an N-acyl-D-glucosamine 6-phosphate = an N-acyl-D-mannosamine 6-phosphate</text>
        <dbReference type="Rhea" id="RHEA:23932"/>
        <dbReference type="ChEBI" id="CHEBI:57599"/>
        <dbReference type="ChEBI" id="CHEBI:57666"/>
        <dbReference type="EC" id="5.1.3.9"/>
    </reaction>
</comment>
<comment type="pathway">
    <text evidence="1">Amino-sugar metabolism; N-acetylneuraminate degradation; D-fructose 6-phosphate from N-acetylneuraminate: step 3/5.</text>
</comment>
<comment type="similarity">
    <text evidence="1">Belongs to the NanE family.</text>
</comment>
<comment type="sequence caution" evidence="2">
    <conflict type="erroneous initiation">
        <sequence resource="EMBL-CDS" id="AAM75271"/>
    </conflict>
</comment>
<gene>
    <name evidence="1" type="primary">nanE</name>
    <name type="ordered locus">EF_0540</name>
    <name type="ORF">ef-0066</name>
</gene>
<feature type="chain" id="PRO_0000179773" description="Putative N-acetylmannosamine-6-phosphate 2-epimerase">
    <location>
        <begin position="1"/>
        <end position="235"/>
    </location>
</feature>
<dbReference type="EC" id="5.1.3.9" evidence="1"/>
<dbReference type="EMBL" id="AF454824">
    <property type="protein sequence ID" value="AAM75271.1"/>
    <property type="status" value="ALT_INIT"/>
    <property type="molecule type" value="Genomic_DNA"/>
</dbReference>
<dbReference type="EMBL" id="AE016830">
    <property type="protein sequence ID" value="AAO80383.1"/>
    <property type="molecule type" value="Genomic_DNA"/>
</dbReference>
<dbReference type="RefSeq" id="NP_814312.1">
    <property type="nucleotide sequence ID" value="NC_004668.1"/>
</dbReference>
<dbReference type="RefSeq" id="WP_002358533.1">
    <property type="nucleotide sequence ID" value="NZ_KE136527.1"/>
</dbReference>
<dbReference type="SMR" id="Q8KU93"/>
<dbReference type="STRING" id="226185.EF_0540"/>
<dbReference type="EnsemblBacteria" id="AAO80383">
    <property type="protein sequence ID" value="AAO80383"/>
    <property type="gene ID" value="EF_0540"/>
</dbReference>
<dbReference type="KEGG" id="efa:EF0540"/>
<dbReference type="PATRIC" id="fig|226185.45.peg.2477"/>
<dbReference type="eggNOG" id="COG3010">
    <property type="taxonomic scope" value="Bacteria"/>
</dbReference>
<dbReference type="HOGENOM" id="CLU_086300_1_0_9"/>
<dbReference type="UniPathway" id="UPA00629">
    <property type="reaction ID" value="UER00682"/>
</dbReference>
<dbReference type="Proteomes" id="UP000001415">
    <property type="component" value="Chromosome"/>
</dbReference>
<dbReference type="GO" id="GO:0005829">
    <property type="term" value="C:cytosol"/>
    <property type="evidence" value="ECO:0007669"/>
    <property type="project" value="TreeGrafter"/>
</dbReference>
<dbReference type="GO" id="GO:0047465">
    <property type="term" value="F:N-acylglucosamine-6-phosphate 2-epimerase activity"/>
    <property type="evidence" value="ECO:0007669"/>
    <property type="project" value="UniProtKB-EC"/>
</dbReference>
<dbReference type="GO" id="GO:0005975">
    <property type="term" value="P:carbohydrate metabolic process"/>
    <property type="evidence" value="ECO:0007669"/>
    <property type="project" value="UniProtKB-UniRule"/>
</dbReference>
<dbReference type="GO" id="GO:0006053">
    <property type="term" value="P:N-acetylmannosamine catabolic process"/>
    <property type="evidence" value="ECO:0007669"/>
    <property type="project" value="TreeGrafter"/>
</dbReference>
<dbReference type="GO" id="GO:0019262">
    <property type="term" value="P:N-acetylneuraminate catabolic process"/>
    <property type="evidence" value="ECO:0007669"/>
    <property type="project" value="UniProtKB-UniRule"/>
</dbReference>
<dbReference type="CDD" id="cd04729">
    <property type="entry name" value="NanE"/>
    <property type="match status" value="1"/>
</dbReference>
<dbReference type="FunFam" id="3.20.20.70:FF:000035">
    <property type="entry name" value="Putative N-acetylmannosamine-6-phosphate 2-epimerase"/>
    <property type="match status" value="1"/>
</dbReference>
<dbReference type="Gene3D" id="3.20.20.70">
    <property type="entry name" value="Aldolase class I"/>
    <property type="match status" value="1"/>
</dbReference>
<dbReference type="HAMAP" id="MF_01235">
    <property type="entry name" value="ManNAc6P_epimer"/>
    <property type="match status" value="1"/>
</dbReference>
<dbReference type="InterPro" id="IPR013785">
    <property type="entry name" value="Aldolase_TIM"/>
</dbReference>
<dbReference type="InterPro" id="IPR007260">
    <property type="entry name" value="NanE"/>
</dbReference>
<dbReference type="InterPro" id="IPR011060">
    <property type="entry name" value="RibuloseP-bd_barrel"/>
</dbReference>
<dbReference type="NCBIfam" id="NF002231">
    <property type="entry name" value="PRK01130.1"/>
    <property type="match status" value="1"/>
</dbReference>
<dbReference type="PANTHER" id="PTHR36204">
    <property type="entry name" value="N-ACETYLMANNOSAMINE-6-PHOSPHATE 2-EPIMERASE-RELATED"/>
    <property type="match status" value="1"/>
</dbReference>
<dbReference type="PANTHER" id="PTHR36204:SF1">
    <property type="entry name" value="N-ACETYLMANNOSAMINE-6-PHOSPHATE 2-EPIMERASE-RELATED"/>
    <property type="match status" value="1"/>
</dbReference>
<dbReference type="Pfam" id="PF04131">
    <property type="entry name" value="NanE"/>
    <property type="match status" value="1"/>
</dbReference>
<dbReference type="SUPFAM" id="SSF51366">
    <property type="entry name" value="Ribulose-phoshate binding barrel"/>
    <property type="match status" value="1"/>
</dbReference>
<name>NANE_ENTFA</name>
<keyword id="KW-0119">Carbohydrate metabolism</keyword>
<keyword id="KW-0413">Isomerase</keyword>
<keyword id="KW-1185">Reference proteome</keyword>